<proteinExistence type="evidence at protein level"/>
<dbReference type="EMBL" id="X98564">
    <property type="protein sequence ID" value="CAA67174.1"/>
    <property type="molecule type" value="mRNA"/>
</dbReference>
<dbReference type="RefSeq" id="NP_067729.1">
    <property type="nucleotide sequence ID" value="NM_021697.3"/>
</dbReference>
<dbReference type="SMR" id="P97557"/>
<dbReference type="FunCoup" id="P97557">
    <property type="interactions" value="7"/>
</dbReference>
<dbReference type="STRING" id="10116.ENSRNOP00000005556"/>
<dbReference type="ChEMBL" id="CHEMBL4524039"/>
<dbReference type="TCDB" id="1.A.1.2.9">
    <property type="family name" value="the voltage-gated ion channel (vic) superfamily"/>
</dbReference>
<dbReference type="iPTMnet" id="P97557"/>
<dbReference type="PhosphoSitePlus" id="P97557"/>
<dbReference type="PaxDb" id="10116-ENSRNOP00000005556"/>
<dbReference type="Ensembl" id="ENSRNOT00000005556.5">
    <property type="protein sequence ID" value="ENSRNOP00000005556.1"/>
    <property type="gene ID" value="ENSRNOG00000004117.7"/>
</dbReference>
<dbReference type="GeneID" id="60326"/>
<dbReference type="KEGG" id="rno:60326"/>
<dbReference type="UCSC" id="RGD:621264">
    <property type="organism name" value="rat"/>
</dbReference>
<dbReference type="AGR" id="RGD:621264"/>
<dbReference type="CTD" id="27012"/>
<dbReference type="RGD" id="621264">
    <property type="gene designation" value="Kcnv1"/>
</dbReference>
<dbReference type="eggNOG" id="KOG3713">
    <property type="taxonomic scope" value="Eukaryota"/>
</dbReference>
<dbReference type="GeneTree" id="ENSGT00940000159740"/>
<dbReference type="HOGENOM" id="CLU_011722_4_1_1"/>
<dbReference type="InParanoid" id="P97557"/>
<dbReference type="OMA" id="SGGDEFW"/>
<dbReference type="OrthoDB" id="296522at2759"/>
<dbReference type="PhylomeDB" id="P97557"/>
<dbReference type="TreeFam" id="TF313103"/>
<dbReference type="Reactome" id="R-RNO-1296072">
    <property type="pathway name" value="Voltage gated Potassium channels"/>
</dbReference>
<dbReference type="PRO" id="PR:P97557"/>
<dbReference type="Proteomes" id="UP000002494">
    <property type="component" value="Chromosome 7"/>
</dbReference>
<dbReference type="Bgee" id="ENSRNOG00000004117">
    <property type="expression patterns" value="Expressed in frontal cortex and 3 other cell types or tissues"/>
</dbReference>
<dbReference type="GO" id="GO:0016020">
    <property type="term" value="C:membrane"/>
    <property type="evidence" value="ECO:0000318"/>
    <property type="project" value="GO_Central"/>
</dbReference>
<dbReference type="GO" id="GO:0008076">
    <property type="term" value="C:voltage-gated potassium channel complex"/>
    <property type="evidence" value="ECO:0000318"/>
    <property type="project" value="GO_Central"/>
</dbReference>
<dbReference type="GO" id="GO:0005267">
    <property type="term" value="F:potassium channel activity"/>
    <property type="evidence" value="ECO:0000314"/>
    <property type="project" value="RGD"/>
</dbReference>
<dbReference type="GO" id="GO:0015459">
    <property type="term" value="F:potassium channel regulator activity"/>
    <property type="evidence" value="ECO:0000318"/>
    <property type="project" value="GO_Central"/>
</dbReference>
<dbReference type="GO" id="GO:0005249">
    <property type="term" value="F:voltage-gated potassium channel activity"/>
    <property type="evidence" value="ECO:0007669"/>
    <property type="project" value="InterPro"/>
</dbReference>
<dbReference type="GO" id="GO:0001508">
    <property type="term" value="P:action potential"/>
    <property type="evidence" value="ECO:0000318"/>
    <property type="project" value="GO_Central"/>
</dbReference>
<dbReference type="GO" id="GO:0071805">
    <property type="term" value="P:potassium ion transmembrane transport"/>
    <property type="evidence" value="ECO:0000318"/>
    <property type="project" value="GO_Central"/>
</dbReference>
<dbReference type="GO" id="GO:0051260">
    <property type="term" value="P:protein homooligomerization"/>
    <property type="evidence" value="ECO:0007669"/>
    <property type="project" value="InterPro"/>
</dbReference>
<dbReference type="FunFam" id="1.10.287.70:FF:000005">
    <property type="entry name" value="potassium voltage-gated channel subfamily G member 1"/>
    <property type="match status" value="1"/>
</dbReference>
<dbReference type="FunFam" id="1.20.120.350:FF:000044">
    <property type="entry name" value="Potassium voltage-gated channel subfamily V member 1"/>
    <property type="match status" value="1"/>
</dbReference>
<dbReference type="FunFam" id="3.30.710.10:FF:000067">
    <property type="entry name" value="Potassium voltage-gated channel subfamily V member 1"/>
    <property type="match status" value="1"/>
</dbReference>
<dbReference type="Gene3D" id="1.10.287.70">
    <property type="match status" value="1"/>
</dbReference>
<dbReference type="Gene3D" id="3.30.710.10">
    <property type="entry name" value="Potassium Channel Kv1.1, Chain A"/>
    <property type="match status" value="1"/>
</dbReference>
<dbReference type="Gene3D" id="1.20.120.350">
    <property type="entry name" value="Voltage-gated potassium channels. Chain C"/>
    <property type="match status" value="1"/>
</dbReference>
<dbReference type="InterPro" id="IPR000210">
    <property type="entry name" value="BTB/POZ_dom"/>
</dbReference>
<dbReference type="InterPro" id="IPR005821">
    <property type="entry name" value="Ion_trans_dom"/>
</dbReference>
<dbReference type="InterPro" id="IPR003968">
    <property type="entry name" value="K_chnl_volt-dep_Kv"/>
</dbReference>
<dbReference type="InterPro" id="IPR003970">
    <property type="entry name" value="K_chnl_volt-dep_Kv8.1"/>
</dbReference>
<dbReference type="InterPro" id="IPR011333">
    <property type="entry name" value="SKP1/BTB/POZ_sf"/>
</dbReference>
<dbReference type="InterPro" id="IPR003131">
    <property type="entry name" value="T1-type_BTB"/>
</dbReference>
<dbReference type="InterPro" id="IPR028325">
    <property type="entry name" value="VG_K_chnl"/>
</dbReference>
<dbReference type="InterPro" id="IPR027359">
    <property type="entry name" value="Volt_channel_dom_sf"/>
</dbReference>
<dbReference type="PANTHER" id="PTHR11537:SF38">
    <property type="entry name" value="POTASSIUM VOLTAGE-GATED CHANNEL SUBFAMILY V MEMBER 1"/>
    <property type="match status" value="1"/>
</dbReference>
<dbReference type="PANTHER" id="PTHR11537">
    <property type="entry name" value="VOLTAGE-GATED POTASSIUM CHANNEL"/>
    <property type="match status" value="1"/>
</dbReference>
<dbReference type="Pfam" id="PF02214">
    <property type="entry name" value="BTB_2"/>
    <property type="match status" value="1"/>
</dbReference>
<dbReference type="Pfam" id="PF00520">
    <property type="entry name" value="Ion_trans"/>
    <property type="match status" value="1"/>
</dbReference>
<dbReference type="PRINTS" id="PR00169">
    <property type="entry name" value="KCHANNEL"/>
</dbReference>
<dbReference type="PRINTS" id="PR01493">
    <property type="entry name" value="KV8CHANNEL"/>
</dbReference>
<dbReference type="PRINTS" id="PR01491">
    <property type="entry name" value="KVCHANNEL"/>
</dbReference>
<dbReference type="SMART" id="SM00225">
    <property type="entry name" value="BTB"/>
    <property type="match status" value="1"/>
</dbReference>
<dbReference type="SUPFAM" id="SSF54695">
    <property type="entry name" value="POZ domain"/>
    <property type="match status" value="1"/>
</dbReference>
<dbReference type="SUPFAM" id="SSF81324">
    <property type="entry name" value="Voltage-gated potassium channels"/>
    <property type="match status" value="1"/>
</dbReference>
<sequence length="503" mass="56663">MDLSPRNRPLLDSSSLDSGSLTSLDSSVFCSEGEGEPLALGDCLTVNVGGSRFVLSQQALSCFPHTRLGKLAVVVASYRRLGALAAAPSPLELCDDANPVDNEYFFDRSSQAFRYVLHYYRTGRLHVMEQLCALSFLQEIQYWGIDELSIDSCCRDRYFRRKELSETLDFKKDTDDQESQHESEQDFSQGPCPTVRQKLWDILEKPGSSTAARIFGVISIIFVAVSIVNMALMSAELSWLNLQLLEILEYVCISWFTGEFILRFLCVKDRCHFLRKVPNIIDLLAILPFYITLLVESLSGSHTTQELENVGRLVQVLRLLRALRMLKLGRHSTGLRSLGMTITQCYEEVGLLLLFLSVGISIFSTIEYFAEQSIPDTTFTSVPCAWWWATTSMTTVGYGDIRPDTTTGKIVAFMCILSGILVLALPIAIINDRFSACYFTLKLKEAAVRQREALKKLTKNIATDSYISVNLRDIYARSIMEMLRLKGRERASTRSSGGDDFWF</sequence>
<gene>
    <name type="primary">Kcnv1</name>
</gene>
<keyword id="KW-1003">Cell membrane</keyword>
<keyword id="KW-0407">Ion channel</keyword>
<keyword id="KW-0406">Ion transport</keyword>
<keyword id="KW-0472">Membrane</keyword>
<keyword id="KW-0630">Potassium</keyword>
<keyword id="KW-0631">Potassium channel</keyword>
<keyword id="KW-0633">Potassium transport</keyword>
<keyword id="KW-1185">Reference proteome</keyword>
<keyword id="KW-0812">Transmembrane</keyword>
<keyword id="KW-1133">Transmembrane helix</keyword>
<keyword id="KW-0813">Transport</keyword>
<keyword id="KW-0851">Voltage-gated channel</keyword>
<name>KCNV1_RAT</name>
<feature type="chain" id="PRO_0000308355" description="Potassium voltage-gated channel subfamily V member 1">
    <location>
        <begin position="1"/>
        <end position="503"/>
    </location>
</feature>
<feature type="topological domain" description="Cytoplasmic" evidence="2">
    <location>
        <begin position="3"/>
        <end position="213"/>
    </location>
</feature>
<feature type="transmembrane region" description="Helical; Name=Segment S1" evidence="2">
    <location>
        <begin position="214"/>
        <end position="234"/>
    </location>
</feature>
<feature type="topological domain" description="Extracellular" evidence="2">
    <location>
        <begin position="235"/>
        <end position="241"/>
    </location>
</feature>
<feature type="transmembrane region" description="Helical; Name=Segment S2" evidence="2">
    <location>
        <begin position="242"/>
        <end position="262"/>
    </location>
</feature>
<feature type="topological domain" description="Cytoplasmic" evidence="2">
    <location>
        <begin position="263"/>
        <end position="279"/>
    </location>
</feature>
<feature type="transmembrane region" description="Helical; Name=Segment S3" evidence="2">
    <location>
        <begin position="280"/>
        <end position="300"/>
    </location>
</feature>
<feature type="topological domain" description="Extracellular" evidence="2">
    <location>
        <begin position="301"/>
        <end position="312"/>
    </location>
</feature>
<feature type="transmembrane region" description="Helical; Voltage-sensor; Name=Segment S4" evidence="2">
    <location>
        <begin position="313"/>
        <end position="334"/>
    </location>
</feature>
<feature type="topological domain" description="Cytoplasmic" evidence="2">
    <location>
        <begin position="335"/>
        <end position="348"/>
    </location>
</feature>
<feature type="transmembrane region" description="Helical; Name=Segment S5" evidence="2">
    <location>
        <begin position="349"/>
        <end position="369"/>
    </location>
</feature>
<feature type="transmembrane region" description="Helical; Name=Segment S6" evidence="2">
    <location>
        <begin position="410"/>
        <end position="430"/>
    </location>
</feature>
<feature type="topological domain" description="Cytoplasmic" evidence="2">
    <location>
        <begin position="431"/>
        <end position="503"/>
    </location>
</feature>
<feature type="region of interest" description="Disordered" evidence="3">
    <location>
        <begin position="1"/>
        <end position="20"/>
    </location>
</feature>
<feature type="region of interest" description="Disordered" evidence="3">
    <location>
        <begin position="171"/>
        <end position="192"/>
    </location>
</feature>
<feature type="short sequence motif" description="Selectivity filter" evidence="1">
    <location>
        <begin position="395"/>
        <end position="400"/>
    </location>
</feature>
<feature type="compositionally biased region" description="Low complexity" evidence="3">
    <location>
        <begin position="10"/>
        <end position="20"/>
    </location>
</feature>
<feature type="compositionally biased region" description="Basic and acidic residues" evidence="3">
    <location>
        <begin position="171"/>
        <end position="184"/>
    </location>
</feature>
<reference key="1">
    <citation type="journal article" date="1997" name="J. Neurosci.">
        <title>Identification and functional characterization of a K+ channel alpha-subunit with regulatory properties specific to brain.</title>
        <authorList>
            <person name="Castellano A."/>
            <person name="Chiara M.D."/>
            <person name="Mellstroem B."/>
            <person name="Molina A."/>
            <person name="Monje F."/>
            <person name="Naranjo J.R."/>
            <person name="Lopez-Barneo J."/>
        </authorList>
    </citation>
    <scope>NUCLEOTIDE SEQUENCE [MRNA]</scope>
    <scope>FUNCTION</scope>
    <scope>INTERACTION WITH KCNB1</scope>
    <scope>TISSUE SPECIFICITY</scope>
    <source>
        <tissue>Brain</tissue>
        <tissue>Hippocampus</tissue>
    </source>
</reference>
<evidence type="ECO:0000250" key="1"/>
<evidence type="ECO:0000255" key="2"/>
<evidence type="ECO:0000256" key="3">
    <source>
        <dbReference type="SAM" id="MobiDB-lite"/>
    </source>
</evidence>
<evidence type="ECO:0000269" key="4">
    <source>
    </source>
</evidence>
<evidence type="ECO:0000305" key="5"/>
<organism>
    <name type="scientific">Rattus norvegicus</name>
    <name type="common">Rat</name>
    <dbReference type="NCBI Taxonomy" id="10116"/>
    <lineage>
        <taxon>Eukaryota</taxon>
        <taxon>Metazoa</taxon>
        <taxon>Chordata</taxon>
        <taxon>Craniata</taxon>
        <taxon>Vertebrata</taxon>
        <taxon>Euteleostomi</taxon>
        <taxon>Mammalia</taxon>
        <taxon>Eutheria</taxon>
        <taxon>Euarchontoglires</taxon>
        <taxon>Glires</taxon>
        <taxon>Rodentia</taxon>
        <taxon>Myomorpha</taxon>
        <taxon>Muroidea</taxon>
        <taxon>Muridae</taxon>
        <taxon>Murinae</taxon>
        <taxon>Rattus</taxon>
    </lineage>
</organism>
<accession>P97557</accession>
<comment type="function">
    <text evidence="1 4">Potassium channel subunit that does not form functional channels by itself. Modulates KCNB1 and KCNB2 channel activity by shifting the threshold for inactivation to more negative values and by slowing the rate of inactivation. Can down-regulate the channel activity of KCNB1, KCNB2, KCNC4 and KCND1, possibly by trapping them in intracellular membranes (By similarity).</text>
</comment>
<comment type="subunit">
    <text evidence="1">Heteromultimer with KCNB1 and KCNB2. Interacts with KCNC4 and KCND1 (By similarity).</text>
</comment>
<comment type="subcellular location">
    <subcellularLocation>
        <location evidence="1">Cell membrane</location>
        <topology evidence="1">Multi-pass membrane protein</topology>
    </subcellularLocation>
    <text evidence="1">Has to be associated with another potassium channel subunit to get inserted in the plasma membrane. Remains intracellular in the absence of KCNB2 (By similarity).</text>
</comment>
<comment type="tissue specificity">
    <text evidence="4">Detected in brain, in neocortex, olfactory tubercle, hippocampus, dentate gyrus, piriform cortex and amygdala. Detected in Purkinje cells and granular cells of the cerebellum, in hippocampal CA4 neurons and neocortex pyramidal cells.</text>
</comment>
<comment type="domain">
    <text evidence="1">The segment S4 is probably the voltage-sensor and is characterized by a series of positively charged amino acids at every third position.</text>
</comment>
<comment type="similarity">
    <text evidence="5">Belongs to the potassium channel family. V (TC 1.A.1.2) subfamily. Kv8.1/KCNV1 sub-subfamily.</text>
</comment>
<protein>
    <recommendedName>
        <fullName>Potassium voltage-gated channel subfamily V member 1</fullName>
    </recommendedName>
    <alternativeName>
        <fullName>Voltage-gated potassium channel subunit Kv2.3r</fullName>
    </alternativeName>
    <alternativeName>
        <fullName>Voltage-gated potassium channel subunit Kv8.1</fullName>
    </alternativeName>
</protein>